<comment type="function">
    <text evidence="2">Cell wall formation.</text>
</comment>
<comment type="catalytic activity">
    <reaction evidence="2">
        <text>2 D-alanine + ATP = D-alanyl-D-alanine + ADP + phosphate + H(+)</text>
        <dbReference type="Rhea" id="RHEA:11224"/>
        <dbReference type="ChEBI" id="CHEBI:15378"/>
        <dbReference type="ChEBI" id="CHEBI:30616"/>
        <dbReference type="ChEBI" id="CHEBI:43474"/>
        <dbReference type="ChEBI" id="CHEBI:57416"/>
        <dbReference type="ChEBI" id="CHEBI:57822"/>
        <dbReference type="ChEBI" id="CHEBI:456216"/>
        <dbReference type="EC" id="6.3.2.4"/>
    </reaction>
</comment>
<comment type="cofactor">
    <cofactor evidence="1">
        <name>Mg(2+)</name>
        <dbReference type="ChEBI" id="CHEBI:18420"/>
    </cofactor>
    <cofactor evidence="1">
        <name>Mn(2+)</name>
        <dbReference type="ChEBI" id="CHEBI:29035"/>
    </cofactor>
    <text evidence="1">Binds 2 magnesium or manganese ions per subunit.</text>
</comment>
<comment type="pathway">
    <text evidence="2">Cell wall biogenesis; peptidoglycan biosynthesis.</text>
</comment>
<comment type="subcellular location">
    <subcellularLocation>
        <location evidence="2">Cytoplasm</location>
    </subcellularLocation>
</comment>
<comment type="similarity">
    <text evidence="2">Belongs to the D-alanine--D-alanine ligase family.</text>
</comment>
<evidence type="ECO:0000250" key="1"/>
<evidence type="ECO:0000255" key="2">
    <source>
        <dbReference type="HAMAP-Rule" id="MF_00047"/>
    </source>
</evidence>
<dbReference type="EC" id="6.3.2.4" evidence="2"/>
<dbReference type="EMBL" id="AM167904">
    <property type="protein sequence ID" value="CAJ50487.1"/>
    <property type="molecule type" value="Genomic_DNA"/>
</dbReference>
<dbReference type="RefSeq" id="WP_012418517.1">
    <property type="nucleotide sequence ID" value="NC_010645.1"/>
</dbReference>
<dbReference type="SMR" id="Q2KVG4"/>
<dbReference type="STRING" id="360910.BAV2877"/>
<dbReference type="GeneID" id="92933873"/>
<dbReference type="KEGG" id="bav:BAV2877"/>
<dbReference type="eggNOG" id="COG1181">
    <property type="taxonomic scope" value="Bacteria"/>
</dbReference>
<dbReference type="HOGENOM" id="CLU_039268_1_2_4"/>
<dbReference type="OrthoDB" id="9813261at2"/>
<dbReference type="UniPathway" id="UPA00219"/>
<dbReference type="Proteomes" id="UP000001977">
    <property type="component" value="Chromosome"/>
</dbReference>
<dbReference type="GO" id="GO:0005829">
    <property type="term" value="C:cytosol"/>
    <property type="evidence" value="ECO:0007669"/>
    <property type="project" value="TreeGrafter"/>
</dbReference>
<dbReference type="GO" id="GO:0005524">
    <property type="term" value="F:ATP binding"/>
    <property type="evidence" value="ECO:0007669"/>
    <property type="project" value="UniProtKB-KW"/>
</dbReference>
<dbReference type="GO" id="GO:0008716">
    <property type="term" value="F:D-alanine-D-alanine ligase activity"/>
    <property type="evidence" value="ECO:0007669"/>
    <property type="project" value="UniProtKB-UniRule"/>
</dbReference>
<dbReference type="GO" id="GO:0046872">
    <property type="term" value="F:metal ion binding"/>
    <property type="evidence" value="ECO:0007669"/>
    <property type="project" value="UniProtKB-KW"/>
</dbReference>
<dbReference type="GO" id="GO:0071555">
    <property type="term" value="P:cell wall organization"/>
    <property type="evidence" value="ECO:0007669"/>
    <property type="project" value="UniProtKB-KW"/>
</dbReference>
<dbReference type="GO" id="GO:0009252">
    <property type="term" value="P:peptidoglycan biosynthetic process"/>
    <property type="evidence" value="ECO:0007669"/>
    <property type="project" value="UniProtKB-UniRule"/>
</dbReference>
<dbReference type="GO" id="GO:0008360">
    <property type="term" value="P:regulation of cell shape"/>
    <property type="evidence" value="ECO:0007669"/>
    <property type="project" value="UniProtKB-KW"/>
</dbReference>
<dbReference type="FunFam" id="3.30.470.20:FF:000008">
    <property type="entry name" value="D-alanine--D-alanine ligase"/>
    <property type="match status" value="1"/>
</dbReference>
<dbReference type="Gene3D" id="3.40.50.20">
    <property type="match status" value="1"/>
</dbReference>
<dbReference type="Gene3D" id="3.30.1490.20">
    <property type="entry name" value="ATP-grasp fold, A domain"/>
    <property type="match status" value="1"/>
</dbReference>
<dbReference type="Gene3D" id="3.30.470.20">
    <property type="entry name" value="ATP-grasp fold, B domain"/>
    <property type="match status" value="1"/>
</dbReference>
<dbReference type="HAMAP" id="MF_00047">
    <property type="entry name" value="Dala_Dala_lig"/>
    <property type="match status" value="1"/>
</dbReference>
<dbReference type="InterPro" id="IPR011761">
    <property type="entry name" value="ATP-grasp"/>
</dbReference>
<dbReference type="InterPro" id="IPR013815">
    <property type="entry name" value="ATP_grasp_subdomain_1"/>
</dbReference>
<dbReference type="InterPro" id="IPR000291">
    <property type="entry name" value="D-Ala_lig_Van_CS"/>
</dbReference>
<dbReference type="InterPro" id="IPR005905">
    <property type="entry name" value="D_ala_D_ala"/>
</dbReference>
<dbReference type="InterPro" id="IPR011095">
    <property type="entry name" value="Dala_Dala_lig_C"/>
</dbReference>
<dbReference type="InterPro" id="IPR011127">
    <property type="entry name" value="Dala_Dala_lig_N"/>
</dbReference>
<dbReference type="InterPro" id="IPR016185">
    <property type="entry name" value="PreATP-grasp_dom_sf"/>
</dbReference>
<dbReference type="NCBIfam" id="TIGR01205">
    <property type="entry name" value="D_ala_D_alaTIGR"/>
    <property type="match status" value="1"/>
</dbReference>
<dbReference type="NCBIfam" id="NF002378">
    <property type="entry name" value="PRK01372.1"/>
    <property type="match status" value="1"/>
</dbReference>
<dbReference type="PANTHER" id="PTHR23132">
    <property type="entry name" value="D-ALANINE--D-ALANINE LIGASE"/>
    <property type="match status" value="1"/>
</dbReference>
<dbReference type="PANTHER" id="PTHR23132:SF23">
    <property type="entry name" value="D-ALANINE--D-ALANINE LIGASE B"/>
    <property type="match status" value="1"/>
</dbReference>
<dbReference type="Pfam" id="PF07478">
    <property type="entry name" value="Dala_Dala_lig_C"/>
    <property type="match status" value="1"/>
</dbReference>
<dbReference type="Pfam" id="PF01820">
    <property type="entry name" value="Dala_Dala_lig_N"/>
    <property type="match status" value="1"/>
</dbReference>
<dbReference type="PIRSF" id="PIRSF039102">
    <property type="entry name" value="Ddl/VanB"/>
    <property type="match status" value="1"/>
</dbReference>
<dbReference type="SUPFAM" id="SSF56059">
    <property type="entry name" value="Glutathione synthetase ATP-binding domain-like"/>
    <property type="match status" value="1"/>
</dbReference>
<dbReference type="SUPFAM" id="SSF52440">
    <property type="entry name" value="PreATP-grasp domain"/>
    <property type="match status" value="1"/>
</dbReference>
<dbReference type="PROSITE" id="PS50975">
    <property type="entry name" value="ATP_GRASP"/>
    <property type="match status" value="1"/>
</dbReference>
<dbReference type="PROSITE" id="PS00843">
    <property type="entry name" value="DALA_DALA_LIGASE_1"/>
    <property type="match status" value="1"/>
</dbReference>
<dbReference type="PROSITE" id="PS00844">
    <property type="entry name" value="DALA_DALA_LIGASE_2"/>
    <property type="match status" value="1"/>
</dbReference>
<sequence>MTQRFGKVGVLYGGRSAEREVSLMSGAGVHEALRSAGVDAHLFDTGLQDLTALEAAGFERVFIALHGRFGEDGAIQGALELLNIPYTGSGVTASALAMDKIMTKRVWLQHGLPTPAFEEIDSDTELRRVPDRLGLPLILKPPHEGSTVGITKVAACADMEQAYAAASHFDEVVLAEQFVRGRELTVALLGSGRNARALPVIEIVAPDGNYDYQNKYFTDVTQYFCPADLPVGVAEQIEKIAVQAYRALGCEGWGRADFILDGQNQPWLLEMNTSPGMTSHSLVPMAARAVGMSYAELCVAILADASCKLRAPARANG</sequence>
<accession>Q2KVG4</accession>
<name>DDL_BORA1</name>
<protein>
    <recommendedName>
        <fullName evidence="2">D-alanine--D-alanine ligase</fullName>
        <ecNumber evidence="2">6.3.2.4</ecNumber>
    </recommendedName>
    <alternativeName>
        <fullName evidence="2">D-Ala-D-Ala ligase</fullName>
    </alternativeName>
    <alternativeName>
        <fullName evidence="2">D-alanylalanine synthetase</fullName>
    </alternativeName>
</protein>
<gene>
    <name evidence="2" type="primary">ddl</name>
    <name type="ordered locus">BAV2877</name>
</gene>
<organism>
    <name type="scientific">Bordetella avium (strain 197N)</name>
    <dbReference type="NCBI Taxonomy" id="360910"/>
    <lineage>
        <taxon>Bacteria</taxon>
        <taxon>Pseudomonadati</taxon>
        <taxon>Pseudomonadota</taxon>
        <taxon>Betaproteobacteria</taxon>
        <taxon>Burkholderiales</taxon>
        <taxon>Alcaligenaceae</taxon>
        <taxon>Bordetella</taxon>
    </lineage>
</organism>
<keyword id="KW-0067">ATP-binding</keyword>
<keyword id="KW-0133">Cell shape</keyword>
<keyword id="KW-0961">Cell wall biogenesis/degradation</keyword>
<keyword id="KW-0963">Cytoplasm</keyword>
<keyword id="KW-0436">Ligase</keyword>
<keyword id="KW-0460">Magnesium</keyword>
<keyword id="KW-0464">Manganese</keyword>
<keyword id="KW-0479">Metal-binding</keyword>
<keyword id="KW-0547">Nucleotide-binding</keyword>
<keyword id="KW-0573">Peptidoglycan synthesis</keyword>
<keyword id="KW-1185">Reference proteome</keyword>
<reference key="1">
    <citation type="journal article" date="2006" name="J. Bacteriol.">
        <title>Comparison of the genome sequence of the poultry pathogen Bordetella avium with those of B. bronchiseptica, B. pertussis, and B. parapertussis reveals extensive diversity in surface structures associated with host interaction.</title>
        <authorList>
            <person name="Sebaihia M."/>
            <person name="Preston A."/>
            <person name="Maskell D.J."/>
            <person name="Kuzmiak H."/>
            <person name="Connell T.D."/>
            <person name="King N.D."/>
            <person name="Orndorff P.E."/>
            <person name="Miyamoto D.M."/>
            <person name="Thomson N.R."/>
            <person name="Harris D."/>
            <person name="Goble A."/>
            <person name="Lord A."/>
            <person name="Murphy L."/>
            <person name="Quail M.A."/>
            <person name="Rutter S."/>
            <person name="Squares R."/>
            <person name="Squares S."/>
            <person name="Woodward J."/>
            <person name="Parkhill J."/>
            <person name="Temple L.M."/>
        </authorList>
    </citation>
    <scope>NUCLEOTIDE SEQUENCE [LARGE SCALE GENOMIC DNA]</scope>
    <source>
        <strain>197N</strain>
    </source>
</reference>
<proteinExistence type="inferred from homology"/>
<feature type="chain" id="PRO_1000030433" description="D-alanine--D-alanine ligase">
    <location>
        <begin position="1"/>
        <end position="317"/>
    </location>
</feature>
<feature type="domain" description="ATP-grasp" evidence="2">
    <location>
        <begin position="104"/>
        <end position="303"/>
    </location>
</feature>
<feature type="binding site" evidence="2">
    <location>
        <begin position="130"/>
        <end position="185"/>
    </location>
    <ligand>
        <name>ATP</name>
        <dbReference type="ChEBI" id="CHEBI:30616"/>
    </ligand>
</feature>
<feature type="binding site" evidence="2">
    <location>
        <position position="257"/>
    </location>
    <ligand>
        <name>Mg(2+)</name>
        <dbReference type="ChEBI" id="CHEBI:18420"/>
        <label>1</label>
    </ligand>
</feature>
<feature type="binding site" evidence="2">
    <location>
        <position position="270"/>
    </location>
    <ligand>
        <name>Mg(2+)</name>
        <dbReference type="ChEBI" id="CHEBI:18420"/>
        <label>1</label>
    </ligand>
</feature>
<feature type="binding site" evidence="2">
    <location>
        <position position="270"/>
    </location>
    <ligand>
        <name>Mg(2+)</name>
        <dbReference type="ChEBI" id="CHEBI:18420"/>
        <label>2</label>
    </ligand>
</feature>
<feature type="binding site" evidence="2">
    <location>
        <position position="272"/>
    </location>
    <ligand>
        <name>Mg(2+)</name>
        <dbReference type="ChEBI" id="CHEBI:18420"/>
        <label>2</label>
    </ligand>
</feature>